<comment type="function">
    <text evidence="1">This enzyme participates in both the breakdown and synthesis of glucose.</text>
</comment>
<comment type="catalytic activity">
    <reaction>
        <text>alpha-D-glucose 1-phosphate = alpha-D-glucose 6-phosphate</text>
        <dbReference type="Rhea" id="RHEA:23536"/>
        <dbReference type="ChEBI" id="CHEBI:58225"/>
        <dbReference type="ChEBI" id="CHEBI:58601"/>
        <dbReference type="EC" id="5.4.2.2"/>
    </reaction>
</comment>
<comment type="cofactor">
    <cofactor evidence="1">
        <name>Mg(2+)</name>
        <dbReference type="ChEBI" id="CHEBI:18420"/>
    </cofactor>
    <text evidence="1">Binds 1 Mg(2+) ion per subunit.</text>
</comment>
<comment type="subcellular location">
    <subcellularLocation>
        <location evidence="1">Cytoplasm</location>
    </subcellularLocation>
</comment>
<comment type="similarity">
    <text evidence="3">Belongs to the phosphohexose mutase family.</text>
</comment>
<name>PGM1_DICDI</name>
<feature type="chain" id="PRO_0000147788" description="Phosphoglucomutase-1">
    <location>
        <begin position="1"/>
        <end position="572"/>
    </location>
</feature>
<feature type="active site" description="Phosphoserine intermediate" evidence="2">
    <location>
        <position position="120"/>
    </location>
</feature>
<feature type="binding site" evidence="2">
    <location>
        <position position="23"/>
    </location>
    <ligand>
        <name>substrate</name>
    </ligand>
</feature>
<feature type="binding site" evidence="2">
    <location>
        <position position="27"/>
    </location>
    <ligand>
        <name>substrate</name>
    </ligand>
</feature>
<feature type="binding site" evidence="2">
    <location>
        <begin position="120"/>
        <end position="121"/>
    </location>
    <ligand>
        <name>substrate</name>
    </ligand>
</feature>
<feature type="binding site" description="via phosphate group" evidence="2">
    <location>
        <position position="120"/>
    </location>
    <ligand>
        <name>Mg(2+)</name>
        <dbReference type="ChEBI" id="CHEBI:18420"/>
    </ligand>
</feature>
<feature type="binding site" evidence="2">
    <location>
        <position position="133"/>
    </location>
    <ligand>
        <name>substrate</name>
    </ligand>
</feature>
<feature type="binding site" evidence="2">
    <location>
        <position position="288"/>
    </location>
    <ligand>
        <name>Mg(2+)</name>
        <dbReference type="ChEBI" id="CHEBI:18420"/>
    </ligand>
</feature>
<feature type="binding site" evidence="2">
    <location>
        <position position="290"/>
    </location>
    <ligand>
        <name>Mg(2+)</name>
        <dbReference type="ChEBI" id="CHEBI:18420"/>
    </ligand>
</feature>
<feature type="binding site" evidence="2">
    <location>
        <begin position="292"/>
        <end position="293"/>
    </location>
    <ligand>
        <name>substrate</name>
    </ligand>
</feature>
<feature type="binding site" evidence="2">
    <location>
        <position position="292"/>
    </location>
    <ligand>
        <name>Mg(2+)</name>
        <dbReference type="ChEBI" id="CHEBI:18420"/>
    </ligand>
</feature>
<feature type="binding site" evidence="2">
    <location>
        <position position="356"/>
    </location>
    <ligand>
        <name>substrate</name>
    </ligand>
</feature>
<feature type="binding site" evidence="2">
    <location>
        <begin position="375"/>
        <end position="377"/>
    </location>
    <ligand>
        <name>substrate</name>
    </ligand>
</feature>
<feature type="binding site" evidence="2">
    <location>
        <position position="388"/>
    </location>
    <ligand>
        <name>substrate</name>
    </ligand>
</feature>
<feature type="binding site" evidence="2">
    <location>
        <position position="524"/>
    </location>
    <ligand>
        <name>substrate</name>
    </ligand>
</feature>
<gene>
    <name type="primary">pgmA</name>
    <name type="ORF">DDB_G0288483</name>
</gene>
<protein>
    <recommendedName>
        <fullName>Phosphoglucomutase-1</fullName>
        <shortName>PGM 1</shortName>
        <ecNumber>5.4.2.2</ecNumber>
    </recommendedName>
    <alternativeName>
        <fullName>Glucose phosphomutase 1</fullName>
    </alternativeName>
</protein>
<sequence length="572" mass="63230">MFKQTFKVNIIPTQPFEGQKPGTSGLRKKVTEVMKTNYLGNFVQSIFNALPEDKLKGSTIVVGGDGRYYNNDAIQLIFQIAAANGVGKILVGRYGLLSTPAISAIVRARSALGAIILTASHNPGGPNGDFGIKYNMSNGGPAPESITNAIYKHTTSITQIKTTRNVSVDNLGLLKTYEWNDGEFVIEVIDSADDYVSLLKTIFDFDGIRKFVKNHPNFTFNFDAMSGVTGAYGKRIFTDELGIPESCLINCNPSQDFNGGHPDPNLTYAPLLVKKMNNGEFDMGCASDGDGDRNMILGKRFFLNPSDSVAVIASNYKAIPYFNKGGLKGLARSMPTSAALERVATDLKVPFFEVPTGWKFFGNLMDAGTLSICGEESFGTGSDHIREKDGIWAIICWLQILTHHNQSTNDKNFVSIEEIVKQHWAKYGRNYYSRYDYEEIDTAPAEAMMKHVSQQIESKQLIGKKFTGISDSLEYEIASCDDFEYKDPIDSSVSSHQGLRIIFTDGSRIIYRLSGTGSTGATVRVYFDKYETQPTQLNNDVQTHLKSLIHIALVEISKLNHYTGRNEPNVIT</sequence>
<organism>
    <name type="scientific">Dictyostelium discoideum</name>
    <name type="common">Social amoeba</name>
    <dbReference type="NCBI Taxonomy" id="44689"/>
    <lineage>
        <taxon>Eukaryota</taxon>
        <taxon>Amoebozoa</taxon>
        <taxon>Evosea</taxon>
        <taxon>Eumycetozoa</taxon>
        <taxon>Dictyostelia</taxon>
        <taxon>Dictyosteliales</taxon>
        <taxon>Dictyosteliaceae</taxon>
        <taxon>Dictyostelium</taxon>
    </lineage>
</organism>
<reference key="1">
    <citation type="journal article" date="1996" name="Proc. Natl. Acad. Sci. U.S.A.">
        <title>Ordered yeast artificial chromosome clones representing the Dictyostelium discoideum genome.</title>
        <authorList>
            <person name="Kuspa A."/>
            <person name="Loomis W.F."/>
        </authorList>
    </citation>
    <scope>NUCLEOTIDE SEQUENCE [LARGE SCALE MRNA]</scope>
    <source>
        <strain>AX4</strain>
    </source>
</reference>
<reference key="2">
    <citation type="journal article" date="2005" name="Nature">
        <title>The genome of the social amoeba Dictyostelium discoideum.</title>
        <authorList>
            <person name="Eichinger L."/>
            <person name="Pachebat J.A."/>
            <person name="Gloeckner G."/>
            <person name="Rajandream M.A."/>
            <person name="Sucgang R."/>
            <person name="Berriman M."/>
            <person name="Song J."/>
            <person name="Olsen R."/>
            <person name="Szafranski K."/>
            <person name="Xu Q."/>
            <person name="Tunggal B."/>
            <person name="Kummerfeld S."/>
            <person name="Madera M."/>
            <person name="Konfortov B.A."/>
            <person name="Rivero F."/>
            <person name="Bankier A.T."/>
            <person name="Lehmann R."/>
            <person name="Hamlin N."/>
            <person name="Davies R."/>
            <person name="Gaudet P."/>
            <person name="Fey P."/>
            <person name="Pilcher K."/>
            <person name="Chen G."/>
            <person name="Saunders D."/>
            <person name="Sodergren E.J."/>
            <person name="Davis P."/>
            <person name="Kerhornou A."/>
            <person name="Nie X."/>
            <person name="Hall N."/>
            <person name="Anjard C."/>
            <person name="Hemphill L."/>
            <person name="Bason N."/>
            <person name="Farbrother P."/>
            <person name="Desany B."/>
            <person name="Just E."/>
            <person name="Morio T."/>
            <person name="Rost R."/>
            <person name="Churcher C.M."/>
            <person name="Cooper J."/>
            <person name="Haydock S."/>
            <person name="van Driessche N."/>
            <person name="Cronin A."/>
            <person name="Goodhead I."/>
            <person name="Muzny D.M."/>
            <person name="Mourier T."/>
            <person name="Pain A."/>
            <person name="Lu M."/>
            <person name="Harper D."/>
            <person name="Lindsay R."/>
            <person name="Hauser H."/>
            <person name="James K.D."/>
            <person name="Quiles M."/>
            <person name="Madan Babu M."/>
            <person name="Saito T."/>
            <person name="Buchrieser C."/>
            <person name="Wardroper A."/>
            <person name="Felder M."/>
            <person name="Thangavelu M."/>
            <person name="Johnson D."/>
            <person name="Knights A."/>
            <person name="Loulseged H."/>
            <person name="Mungall K.L."/>
            <person name="Oliver K."/>
            <person name="Price C."/>
            <person name="Quail M.A."/>
            <person name="Urushihara H."/>
            <person name="Hernandez J."/>
            <person name="Rabbinowitsch E."/>
            <person name="Steffen D."/>
            <person name="Sanders M."/>
            <person name="Ma J."/>
            <person name="Kohara Y."/>
            <person name="Sharp S."/>
            <person name="Simmonds M.N."/>
            <person name="Spiegler S."/>
            <person name="Tivey A."/>
            <person name="Sugano S."/>
            <person name="White B."/>
            <person name="Walker D."/>
            <person name="Woodward J.R."/>
            <person name="Winckler T."/>
            <person name="Tanaka Y."/>
            <person name="Shaulsky G."/>
            <person name="Schleicher M."/>
            <person name="Weinstock G.M."/>
            <person name="Rosenthal A."/>
            <person name="Cox E.C."/>
            <person name="Chisholm R.L."/>
            <person name="Gibbs R.A."/>
            <person name="Loomis W.F."/>
            <person name="Platzer M."/>
            <person name="Kay R.R."/>
            <person name="Williams J.G."/>
            <person name="Dear P.H."/>
            <person name="Noegel A.A."/>
            <person name="Barrell B.G."/>
            <person name="Kuspa A."/>
        </authorList>
    </citation>
    <scope>NUCLEOTIDE SEQUENCE [LARGE SCALE GENOMIC DNA]</scope>
    <source>
        <strain>AX4</strain>
    </source>
</reference>
<accession>Q23919</accession>
<accession>Q54IV0</accession>
<keyword id="KW-0119">Carbohydrate metabolism</keyword>
<keyword id="KW-0963">Cytoplasm</keyword>
<keyword id="KW-0313">Glucose metabolism</keyword>
<keyword id="KW-0413">Isomerase</keyword>
<keyword id="KW-0460">Magnesium</keyword>
<keyword id="KW-0479">Metal-binding</keyword>
<keyword id="KW-0597">Phosphoprotein</keyword>
<keyword id="KW-1185">Reference proteome</keyword>
<evidence type="ECO:0000250" key="1"/>
<evidence type="ECO:0000250" key="2">
    <source>
        <dbReference type="UniProtKB" id="P00949"/>
    </source>
</evidence>
<evidence type="ECO:0000305" key="3"/>
<proteinExistence type="evidence at transcript level"/>
<dbReference type="EC" id="5.4.2.2"/>
<dbReference type="EMBL" id="U61984">
    <property type="protein sequence ID" value="AAB03667.1"/>
    <property type="molecule type" value="mRNA"/>
</dbReference>
<dbReference type="EMBL" id="AAFI02000112">
    <property type="protein sequence ID" value="EAL63190.1"/>
    <property type="molecule type" value="Genomic_DNA"/>
</dbReference>
<dbReference type="RefSeq" id="XP_636703.1">
    <property type="nucleotide sequence ID" value="XM_631611.1"/>
</dbReference>
<dbReference type="SMR" id="Q23919"/>
<dbReference type="FunCoup" id="Q23919">
    <property type="interactions" value="460"/>
</dbReference>
<dbReference type="STRING" id="44689.Q23919"/>
<dbReference type="PaxDb" id="44689-DDB0191348"/>
<dbReference type="EnsemblProtists" id="EAL63190">
    <property type="protein sequence ID" value="EAL63190"/>
    <property type="gene ID" value="DDB_G0288483"/>
</dbReference>
<dbReference type="GeneID" id="8626660"/>
<dbReference type="KEGG" id="ddi:DDB_G0288483"/>
<dbReference type="dictyBase" id="DDB_G0288483">
    <property type="gene designation" value="pgmA"/>
</dbReference>
<dbReference type="VEuPathDB" id="AmoebaDB:DDB_G0288483"/>
<dbReference type="eggNOG" id="KOG0625">
    <property type="taxonomic scope" value="Eukaryota"/>
</dbReference>
<dbReference type="HOGENOM" id="CLU_009330_0_1_1"/>
<dbReference type="InParanoid" id="Q23919"/>
<dbReference type="OMA" id="WIQDRAN"/>
<dbReference type="PhylomeDB" id="Q23919"/>
<dbReference type="Reactome" id="R-DDI-3322077">
    <property type="pathway name" value="Glycogen synthesis"/>
</dbReference>
<dbReference type="Reactome" id="R-DDI-6798695">
    <property type="pathway name" value="Neutrophil degranulation"/>
</dbReference>
<dbReference type="Reactome" id="R-DDI-70221">
    <property type="pathway name" value="Glycogen breakdown (glycogenolysis)"/>
</dbReference>
<dbReference type="Reactome" id="R-DDI-70370">
    <property type="pathway name" value="Galactose catabolism"/>
</dbReference>
<dbReference type="PRO" id="PR:Q23919"/>
<dbReference type="Proteomes" id="UP000002195">
    <property type="component" value="Chromosome 5"/>
</dbReference>
<dbReference type="GO" id="GO:0005829">
    <property type="term" value="C:cytosol"/>
    <property type="evidence" value="ECO:0000318"/>
    <property type="project" value="GO_Central"/>
</dbReference>
<dbReference type="GO" id="GO:0000287">
    <property type="term" value="F:magnesium ion binding"/>
    <property type="evidence" value="ECO:0007669"/>
    <property type="project" value="InterPro"/>
</dbReference>
<dbReference type="GO" id="GO:0004614">
    <property type="term" value="F:phosphoglucomutase activity"/>
    <property type="evidence" value="ECO:0000318"/>
    <property type="project" value="GO_Central"/>
</dbReference>
<dbReference type="GO" id="GO:0005975">
    <property type="term" value="P:carbohydrate metabolic process"/>
    <property type="evidence" value="ECO:0000318"/>
    <property type="project" value="GO_Central"/>
</dbReference>
<dbReference type="GO" id="GO:0006006">
    <property type="term" value="P:glucose metabolic process"/>
    <property type="evidence" value="ECO:0007669"/>
    <property type="project" value="UniProtKB-KW"/>
</dbReference>
<dbReference type="CDD" id="cd03085">
    <property type="entry name" value="PGM1"/>
    <property type="match status" value="1"/>
</dbReference>
<dbReference type="FunFam" id="3.30.310.50:FF:000002">
    <property type="entry name" value="Phosphoglucomutase 5"/>
    <property type="match status" value="1"/>
</dbReference>
<dbReference type="FunFam" id="3.40.120.10:FF:000004">
    <property type="entry name" value="Phosphoglucomutase 5"/>
    <property type="match status" value="1"/>
</dbReference>
<dbReference type="FunFam" id="3.40.120.10:FF:000005">
    <property type="entry name" value="Phosphoglucomutase 5"/>
    <property type="match status" value="1"/>
</dbReference>
<dbReference type="FunFam" id="3.40.120.10:FF:000040">
    <property type="entry name" value="Phosphoglucomutase A"/>
    <property type="match status" value="1"/>
</dbReference>
<dbReference type="Gene3D" id="3.40.120.10">
    <property type="entry name" value="Alpha-D-Glucose-1,6-Bisphosphate, subunit A, domain 3"/>
    <property type="match status" value="3"/>
</dbReference>
<dbReference type="Gene3D" id="3.30.310.50">
    <property type="entry name" value="Alpha-D-phosphohexomutase, C-terminal domain"/>
    <property type="match status" value="1"/>
</dbReference>
<dbReference type="InterPro" id="IPR005844">
    <property type="entry name" value="A-D-PHexomutase_a/b/a-I"/>
</dbReference>
<dbReference type="InterPro" id="IPR016055">
    <property type="entry name" value="A-D-PHexomutase_a/b/a-I/II/III"/>
</dbReference>
<dbReference type="InterPro" id="IPR005845">
    <property type="entry name" value="A-D-PHexomutase_a/b/a-II"/>
</dbReference>
<dbReference type="InterPro" id="IPR005846">
    <property type="entry name" value="A-D-PHexomutase_a/b/a-III"/>
</dbReference>
<dbReference type="InterPro" id="IPR036900">
    <property type="entry name" value="A-D-PHexomutase_C_sf"/>
</dbReference>
<dbReference type="InterPro" id="IPR016066">
    <property type="entry name" value="A-D-PHexomutase_CS"/>
</dbReference>
<dbReference type="InterPro" id="IPR005841">
    <property type="entry name" value="Alpha-D-phosphohexomutase_SF"/>
</dbReference>
<dbReference type="InterPro" id="IPR045244">
    <property type="entry name" value="PGM"/>
</dbReference>
<dbReference type="NCBIfam" id="NF005737">
    <property type="entry name" value="PRK07564.1-1"/>
    <property type="match status" value="1"/>
</dbReference>
<dbReference type="PANTHER" id="PTHR22573:SF2">
    <property type="entry name" value="PHOSPHOGLUCOMUTASE"/>
    <property type="match status" value="1"/>
</dbReference>
<dbReference type="PANTHER" id="PTHR22573">
    <property type="entry name" value="PHOSPHOHEXOMUTASE FAMILY MEMBER"/>
    <property type="match status" value="1"/>
</dbReference>
<dbReference type="Pfam" id="PF24947">
    <property type="entry name" value="PGM1_C_vert_fung"/>
    <property type="match status" value="1"/>
</dbReference>
<dbReference type="Pfam" id="PF02878">
    <property type="entry name" value="PGM_PMM_I"/>
    <property type="match status" value="1"/>
</dbReference>
<dbReference type="Pfam" id="PF02879">
    <property type="entry name" value="PGM_PMM_II"/>
    <property type="match status" value="1"/>
</dbReference>
<dbReference type="Pfam" id="PF02880">
    <property type="entry name" value="PGM_PMM_III"/>
    <property type="match status" value="1"/>
</dbReference>
<dbReference type="PRINTS" id="PR00509">
    <property type="entry name" value="PGMPMM"/>
</dbReference>
<dbReference type="SUPFAM" id="SSF55957">
    <property type="entry name" value="Phosphoglucomutase, C-terminal domain"/>
    <property type="match status" value="1"/>
</dbReference>
<dbReference type="SUPFAM" id="SSF53738">
    <property type="entry name" value="Phosphoglucomutase, first 3 domains"/>
    <property type="match status" value="3"/>
</dbReference>
<dbReference type="PROSITE" id="PS00710">
    <property type="entry name" value="PGM_PMM"/>
    <property type="match status" value="1"/>
</dbReference>